<sequence length="472" mass="52720">MDNSDCRVPWASAPSSMTCLSLDPTKCHSSSSSSKCQPDCDTPPAAEKIQRHIAYTQRCPGKITTLLAVLLLVLPLSFTPAHSCGPGRGLGRRRERNLYPLVLKQTIPNLSEYTSGASGPLEGPIRRDSPKFKDLVPNYNRDILFRDDEGTGADRLMSKRCKEKLNVLAYSVMNEWPGVRLLVAESWDEDYQHGKESLHYEGRAVTIATSDRDQSKYGMLARLAVEAGFDWVSYVSRRHIYCSVKSDSSISSHVHGCFTPESTALLEGGVRKPLGELSIGDRVLSMTSNGQPVYSEVILFMDRNLKQMQNFVRLHTAGGAVLTVTPAHLVSVWQPERQELTFTFADRIEERQHVLVRNEETGELRPDQVIKVESVRSMGVVAPLTREGTIVVNSVAASCYAVINSQSLAHWGLAPMRLLSTLEAWLPAKDQLRSSKDHPKDSSAERQNGIHWYAEALYKIKDYVLPKSWRHD</sequence>
<gene>
    <name evidence="1" type="primary">hh</name>
    <name type="ORF">GF18029</name>
</gene>
<reference evidence="5" key="1">
    <citation type="journal article" date="2007" name="Nature">
        <title>Evolution of genes and genomes on the Drosophila phylogeny.</title>
        <authorList>
            <consortium name="Drosophila 12 genomes consortium"/>
        </authorList>
    </citation>
    <scope>NUCLEOTIDE SEQUENCE [LARGE SCALE GENOMIC DNA]</scope>
    <source>
        <strain evidence="5">Tucson 14024-0371.13</strain>
    </source>
</reference>
<comment type="function">
    <molecule>Protein hedgehog</molecule>
    <text evidence="1 3">The C-terminal part of the hedgehog protein precursor displays an autoproteolysis activity that results in the cleavage of the full-length protein into two parts (N-product and C-product) (By similarity). In addition, the C-terminal part displays a cholesterol transferase activity that results by the covalent attachment of a cholesterol moiety to the C-terminal of the newly generated N-product (By similarity). Once cleaved, the C-product has no signaling activity and diffuses from the cell (By similarity).</text>
</comment>
<comment type="function">
    <molecule>Protein hedgehog N-product</molecule>
    <text evidence="1">The dually lipidated hedgehog protein N-product is a morphogen which is essential for a variety of patterning events during development. Establishes the anterior-posterior axis of the embryonic segments and patterns the larval imaginal disks. Binds to the patched (ptc) receptor, which functions in association with smoothened (smo), to activate the transcription of target genes wingless (wg), decapentaplegic (dpp) and ptc. In the absence of hh, ptc represses the constitutive signaling activity of smo through fused (fu). Essential component of a signaling pathway which regulates the Duox-dependent gut immune response to bacterial uracil; required to activate Cad99C-dependent endosome formation, norpA-dependent Ca2+ mobilization and p38 MAPK, which are essential steps in the Duox-dependent production of reactive oxygen species (ROS) in response to intestinal bacterial infection. During photoreceptor differentiation, it up-regulates transcription of Ubr3, which in turn promotes the hh-signaling pathway by mediating the ubiquitination and degradation of cos.</text>
</comment>
<comment type="catalytic activity">
    <molecule>Protein hedgehog</molecule>
    <reaction evidence="3">
        <text>glycyl-L-cysteinyl-[protein] + cholesterol + H(+) = [protein]-C-terminal glycyl cholesterol ester + N-terminal L-cysteinyl-[protein]</text>
        <dbReference type="Rhea" id="RHEA:59504"/>
        <dbReference type="Rhea" id="RHEA-COMP:12707"/>
        <dbReference type="Rhea" id="RHEA-COMP:15369"/>
        <dbReference type="Rhea" id="RHEA-COMP:15374"/>
        <dbReference type="ChEBI" id="CHEBI:15378"/>
        <dbReference type="ChEBI" id="CHEBI:16113"/>
        <dbReference type="ChEBI" id="CHEBI:65250"/>
        <dbReference type="ChEBI" id="CHEBI:143135"/>
        <dbReference type="ChEBI" id="CHEBI:143140"/>
    </reaction>
    <physiologicalReaction direction="left-to-right" evidence="3">
        <dbReference type="Rhea" id="RHEA:59505"/>
    </physiologicalReaction>
</comment>
<comment type="subunit">
    <text evidence="1">Interacts with shf.</text>
</comment>
<comment type="subcellular location">
    <subcellularLocation>
        <location evidence="1">Nucleus</location>
    </subcellularLocation>
    <subcellularLocation>
        <location evidence="1">Cytoplasm</location>
    </subcellularLocation>
    <text evidence="1">Nuclear up to embryonic stage 10 and then at stage 11 shifts to the cytoplasm. Also secreted in either cleaved or uncleaved form to mediate signaling to other cells.</text>
</comment>
<comment type="subcellular location">
    <molecule>Protein hedgehog N-product</molecule>
    <subcellularLocation>
        <location evidence="1">Cell membrane</location>
        <topology evidence="1">Lipid-anchor</topology>
    </subcellularLocation>
    <text evidence="1">The N-terminal peptide remains associated with the cell surface. Heparan sulfate proteoglycans of the extracellular matrix play an essential role in diffusion. Lipophorin is required for diffusion, probably by acting as vehicle for its movement, explaining how it can spread over long distances despite its lipidation.</text>
</comment>
<comment type="PTM">
    <molecule>Protein hedgehog</molecule>
    <text evidence="1 2 3">The C-terminal part of the hedgehog protein precursor displays an autoproteolysis activity that results in the cleavage of the full-length protein into two parts (N-product and C-product) (By similarity). In addition, the C-terminal part displays a cholesterol transferase activity that results by the covalent attachment of a cholesterol moiety to the C-terminal of the newly generated N-product (By similarity). The N-product is the active species in both local and long-range signaling, whereas the C-product has no signaling activity (By similarity).</text>
</comment>
<comment type="PTM">
    <molecule>Protein hedgehog N-product</molecule>
    <text evidence="3">Cholesterylation is required for N-product targeting to lipid rafts and multimerization.</text>
</comment>
<comment type="PTM">
    <molecule>Protein hedgehog N-product</molecule>
    <text evidence="1">N-palmitoylation by Rasp of the hedgehog N-product, within the secretory pathway, is required for the embryonic and larval patterning activities of the hedgehog signal.</text>
</comment>
<comment type="similarity">
    <text evidence="4">Belongs to the hedgehog family.</text>
</comment>
<keyword id="KW-0068">Autocatalytic cleavage</keyword>
<keyword id="KW-0106">Calcium</keyword>
<keyword id="KW-1003">Cell membrane</keyword>
<keyword id="KW-0963">Cytoplasm</keyword>
<keyword id="KW-0217">Developmental protein</keyword>
<keyword id="KW-0378">Hydrolase</keyword>
<keyword id="KW-0449">Lipoprotein</keyword>
<keyword id="KW-0472">Membrane</keyword>
<keyword id="KW-0479">Metal-binding</keyword>
<keyword id="KW-0504">Morphogen</keyword>
<keyword id="KW-0539">Nucleus</keyword>
<keyword id="KW-0564">Palmitate</keyword>
<keyword id="KW-0645">Protease</keyword>
<keyword id="KW-1185">Reference proteome</keyword>
<keyword id="KW-0709">Segmentation polarity protein</keyword>
<keyword id="KW-0732">Signal</keyword>
<keyword id="KW-0808">Transferase</keyword>
<evidence type="ECO:0000250" key="1">
    <source>
        <dbReference type="UniProtKB" id="Q02936"/>
    </source>
</evidence>
<evidence type="ECO:0000250" key="2">
    <source>
        <dbReference type="UniProtKB" id="Q15465"/>
    </source>
</evidence>
<evidence type="ECO:0000250" key="3">
    <source>
        <dbReference type="UniProtKB" id="Q62226"/>
    </source>
</evidence>
<evidence type="ECO:0000255" key="4"/>
<evidence type="ECO:0000312" key="5">
    <source>
        <dbReference type="EMBL" id="EDV42516.1"/>
    </source>
</evidence>
<dbReference type="EC" id="3.1.-.-" evidence="3"/>
<dbReference type="EMBL" id="CH902617">
    <property type="protein sequence ID" value="EDV42516.1"/>
    <property type="molecule type" value="Genomic_DNA"/>
</dbReference>
<dbReference type="SMR" id="B3LV44"/>
<dbReference type="FunCoup" id="B3LV44">
    <property type="interactions" value="42"/>
</dbReference>
<dbReference type="STRING" id="7217.B3LV44"/>
<dbReference type="MEROPS" id="C46.001"/>
<dbReference type="EnsemblMetazoa" id="FBtr0122729">
    <property type="protein sequence ID" value="FBpp0121221"/>
    <property type="gene ID" value="FBgn0095047"/>
</dbReference>
<dbReference type="EnsemblMetazoa" id="XM_001953919.4">
    <property type="protein sequence ID" value="XP_001953955.1"/>
    <property type="gene ID" value="LOC6500808"/>
</dbReference>
<dbReference type="GeneID" id="6500808"/>
<dbReference type="KEGG" id="dan:6500808"/>
<dbReference type="CTD" id="42737"/>
<dbReference type="eggNOG" id="KOG3638">
    <property type="taxonomic scope" value="Eukaryota"/>
</dbReference>
<dbReference type="HOGENOM" id="CLU_034686_0_0_1"/>
<dbReference type="InParanoid" id="B3LV44"/>
<dbReference type="OMA" id="HWVSSLL"/>
<dbReference type="OrthoDB" id="5212at2759"/>
<dbReference type="PhylomeDB" id="B3LV44"/>
<dbReference type="Proteomes" id="UP000007801">
    <property type="component" value="Unassembled WGS sequence"/>
</dbReference>
<dbReference type="GO" id="GO:0005737">
    <property type="term" value="C:cytoplasm"/>
    <property type="evidence" value="ECO:0007669"/>
    <property type="project" value="UniProtKB-SubCell"/>
</dbReference>
<dbReference type="GO" id="GO:0005615">
    <property type="term" value="C:extracellular space"/>
    <property type="evidence" value="ECO:0007669"/>
    <property type="project" value="TreeGrafter"/>
</dbReference>
<dbReference type="GO" id="GO:0005634">
    <property type="term" value="C:nucleus"/>
    <property type="evidence" value="ECO:0007669"/>
    <property type="project" value="UniProtKB-SubCell"/>
</dbReference>
<dbReference type="GO" id="GO:0005886">
    <property type="term" value="C:plasma membrane"/>
    <property type="evidence" value="ECO:0007669"/>
    <property type="project" value="UniProtKB-SubCell"/>
</dbReference>
<dbReference type="GO" id="GO:0005509">
    <property type="term" value="F:calcium ion binding"/>
    <property type="evidence" value="ECO:0007669"/>
    <property type="project" value="TreeGrafter"/>
</dbReference>
<dbReference type="GO" id="GO:0140853">
    <property type="term" value="F:cholesterol-protein transferase activity"/>
    <property type="evidence" value="ECO:0000250"/>
    <property type="project" value="UniProtKB"/>
</dbReference>
<dbReference type="GO" id="GO:0016015">
    <property type="term" value="F:morphogen activity"/>
    <property type="evidence" value="ECO:0007669"/>
    <property type="project" value="UniProtKB-KW"/>
</dbReference>
<dbReference type="GO" id="GO:0005113">
    <property type="term" value="F:patched binding"/>
    <property type="evidence" value="ECO:0007669"/>
    <property type="project" value="TreeGrafter"/>
</dbReference>
<dbReference type="GO" id="GO:0008233">
    <property type="term" value="F:peptidase activity"/>
    <property type="evidence" value="ECO:0000250"/>
    <property type="project" value="UniProtKB"/>
</dbReference>
<dbReference type="GO" id="GO:0009653">
    <property type="term" value="P:anatomical structure morphogenesis"/>
    <property type="evidence" value="ECO:0007669"/>
    <property type="project" value="UniProtKB-KW"/>
</dbReference>
<dbReference type="GO" id="GO:0001708">
    <property type="term" value="P:cell fate specification"/>
    <property type="evidence" value="ECO:0007669"/>
    <property type="project" value="TreeGrafter"/>
</dbReference>
<dbReference type="GO" id="GO:0007267">
    <property type="term" value="P:cell-cell signaling"/>
    <property type="evidence" value="ECO:0007669"/>
    <property type="project" value="InterPro"/>
</dbReference>
<dbReference type="GO" id="GO:0016539">
    <property type="term" value="P:intein-mediated protein splicing"/>
    <property type="evidence" value="ECO:0007669"/>
    <property type="project" value="InterPro"/>
</dbReference>
<dbReference type="GO" id="GO:0016540">
    <property type="term" value="P:protein autoprocessing"/>
    <property type="evidence" value="ECO:0007669"/>
    <property type="project" value="InterPro"/>
</dbReference>
<dbReference type="GO" id="GO:0010468">
    <property type="term" value="P:regulation of gene expression"/>
    <property type="evidence" value="ECO:0007669"/>
    <property type="project" value="TreeGrafter"/>
</dbReference>
<dbReference type="GO" id="GO:0007367">
    <property type="term" value="P:segment polarity determination"/>
    <property type="evidence" value="ECO:0000250"/>
    <property type="project" value="UniProtKB"/>
</dbReference>
<dbReference type="GO" id="GO:0097264">
    <property type="term" value="P:self proteolysis"/>
    <property type="evidence" value="ECO:0000250"/>
    <property type="project" value="UniProtKB"/>
</dbReference>
<dbReference type="GO" id="GO:0007224">
    <property type="term" value="P:smoothened signaling pathway"/>
    <property type="evidence" value="ECO:0007669"/>
    <property type="project" value="TreeGrafter"/>
</dbReference>
<dbReference type="GO" id="GO:0048731">
    <property type="term" value="P:system development"/>
    <property type="evidence" value="ECO:0007669"/>
    <property type="project" value="UniProtKB-ARBA"/>
</dbReference>
<dbReference type="CDD" id="cd00081">
    <property type="entry name" value="Hint"/>
    <property type="match status" value="1"/>
</dbReference>
<dbReference type="FunFam" id="2.170.16.10:FF:000001">
    <property type="entry name" value="Indian hedgehog"/>
    <property type="match status" value="1"/>
</dbReference>
<dbReference type="FunFam" id="3.30.1380.10:FF:000001">
    <property type="entry name" value="Indian hedgehog"/>
    <property type="match status" value="1"/>
</dbReference>
<dbReference type="Gene3D" id="3.30.1380.10">
    <property type="match status" value="1"/>
</dbReference>
<dbReference type="Gene3D" id="2.170.16.10">
    <property type="entry name" value="Hedgehog/Intein (Hint) domain"/>
    <property type="match status" value="1"/>
</dbReference>
<dbReference type="InterPro" id="IPR001657">
    <property type="entry name" value="Hedgehog"/>
</dbReference>
<dbReference type="InterPro" id="IPR001767">
    <property type="entry name" value="Hedgehog_Hint"/>
</dbReference>
<dbReference type="InterPro" id="IPR009045">
    <property type="entry name" value="Hedgehog_sig/DD-Pept_Zn-bd_sf"/>
</dbReference>
<dbReference type="InterPro" id="IPR050387">
    <property type="entry name" value="Hedgehog_Signaling"/>
</dbReference>
<dbReference type="InterPro" id="IPR000320">
    <property type="entry name" value="Hedgehog_signalling_dom"/>
</dbReference>
<dbReference type="InterPro" id="IPR003586">
    <property type="entry name" value="Hint_dom_C"/>
</dbReference>
<dbReference type="InterPro" id="IPR003587">
    <property type="entry name" value="Hint_dom_N"/>
</dbReference>
<dbReference type="InterPro" id="IPR036844">
    <property type="entry name" value="Hint_dom_sf"/>
</dbReference>
<dbReference type="InterPro" id="IPR006141">
    <property type="entry name" value="Intein_N"/>
</dbReference>
<dbReference type="PANTHER" id="PTHR11889">
    <property type="entry name" value="HEDGEHOG"/>
    <property type="match status" value="1"/>
</dbReference>
<dbReference type="PANTHER" id="PTHR11889:SF31">
    <property type="entry name" value="PROTEIN HEDGEHOG"/>
    <property type="match status" value="1"/>
</dbReference>
<dbReference type="Pfam" id="PF01085">
    <property type="entry name" value="HH_signal"/>
    <property type="match status" value="1"/>
</dbReference>
<dbReference type="Pfam" id="PF01079">
    <property type="entry name" value="Hint"/>
    <property type="match status" value="1"/>
</dbReference>
<dbReference type="PIRSF" id="PIRSF009400">
    <property type="entry name" value="Peptidase_C46"/>
    <property type="match status" value="1"/>
</dbReference>
<dbReference type="PRINTS" id="PR00632">
    <property type="entry name" value="SONICHHOG"/>
</dbReference>
<dbReference type="SMART" id="SM00305">
    <property type="entry name" value="HintC"/>
    <property type="match status" value="1"/>
</dbReference>
<dbReference type="SMART" id="SM00306">
    <property type="entry name" value="HintN"/>
    <property type="match status" value="1"/>
</dbReference>
<dbReference type="SUPFAM" id="SSF55166">
    <property type="entry name" value="Hedgehog/DD-peptidase"/>
    <property type="match status" value="1"/>
</dbReference>
<dbReference type="SUPFAM" id="SSF51294">
    <property type="entry name" value="Hedgehog/intein (Hint) domain"/>
    <property type="match status" value="1"/>
</dbReference>
<dbReference type="PROSITE" id="PS50817">
    <property type="entry name" value="INTEIN_N_TER"/>
    <property type="match status" value="1"/>
</dbReference>
<accession>B3LV44</accession>
<proteinExistence type="inferred from homology"/>
<feature type="signal peptide" evidence="4">
    <location>
        <begin position="1"/>
        <end status="unknown"/>
    </location>
</feature>
<feature type="propeptide" id="PRO_0000383050" evidence="4">
    <location>
        <begin status="unknown"/>
        <end position="83"/>
    </location>
</feature>
<feature type="chain" id="PRO_0000383051" description="Protein hedgehog" evidence="1">
    <location>
        <begin position="84"/>
        <end position="472"/>
    </location>
</feature>
<feature type="chain" id="PRO_0000383052" description="Protein hedgehog N-product" evidence="1">
    <location>
        <begin position="84"/>
        <end position="256"/>
    </location>
</feature>
<feature type="binding site" evidence="2">
    <location>
        <position position="149"/>
    </location>
    <ligand>
        <name>Ca(2+)</name>
        <dbReference type="ChEBI" id="CHEBI:29108"/>
        <label>1</label>
    </ligand>
</feature>
<feature type="binding site" evidence="2">
    <location>
        <position position="149"/>
    </location>
    <ligand>
        <name>Ca(2+)</name>
        <dbReference type="ChEBI" id="CHEBI:29108"/>
        <label>2</label>
    </ligand>
</feature>
<feature type="binding site" evidence="2">
    <location>
        <position position="154"/>
    </location>
    <ligand>
        <name>Ca(2+)</name>
        <dbReference type="ChEBI" id="CHEBI:29108"/>
        <label>1</label>
    </ligand>
</feature>
<feature type="binding site" evidence="2">
    <location>
        <position position="185"/>
    </location>
    <ligand>
        <name>Ca(2+)</name>
        <dbReference type="ChEBI" id="CHEBI:29108"/>
        <label>1</label>
    </ligand>
</feature>
<feature type="binding site" evidence="2">
    <location>
        <position position="185"/>
    </location>
    <ligand>
        <name>Ca(2+)</name>
        <dbReference type="ChEBI" id="CHEBI:29108"/>
        <label>2</label>
    </ligand>
</feature>
<feature type="binding site" evidence="2">
    <location>
        <position position="188"/>
    </location>
    <ligand>
        <name>Ca(2+)</name>
        <dbReference type="ChEBI" id="CHEBI:29108"/>
        <label>2</label>
    </ligand>
</feature>
<feature type="binding site" evidence="2">
    <location>
        <position position="190"/>
    </location>
    <ligand>
        <name>Ca(2+)</name>
        <dbReference type="ChEBI" id="CHEBI:29108"/>
        <label>2</label>
    </ligand>
</feature>
<feature type="site" description="Cleavage; by autolysis" evidence="1">
    <location>
        <begin position="256"/>
        <end position="257"/>
    </location>
</feature>
<feature type="site" description="Involved in cholesterol transfer" evidence="1">
    <location>
        <position position="302"/>
    </location>
</feature>
<feature type="site" description="Involved in auto-cleavage" evidence="1">
    <location>
        <position position="325"/>
    </location>
</feature>
<feature type="site" description="Essential for auto-cleavage" evidence="1">
    <location>
        <position position="328"/>
    </location>
</feature>
<feature type="lipid moiety-binding region" description="N-palmitoyl cysteine" evidence="1">
    <location>
        <position position="84"/>
    </location>
</feature>
<feature type="lipid moiety-binding region" description="Cholesterol glycine ester" evidence="1">
    <location>
        <position position="256"/>
    </location>
</feature>
<protein>
    <recommendedName>
        <fullName evidence="1">Protein hedgehog</fullName>
        <ecNumber evidence="3">3.1.-.-</ecNumber>
    </recommendedName>
    <component>
        <recommendedName>
            <fullName evidence="1">Protein hedgehog N-product</fullName>
        </recommendedName>
    </component>
</protein>
<name>HH_DROAN</name>
<organism>
    <name type="scientific">Drosophila ananassae</name>
    <name type="common">Fruit fly</name>
    <dbReference type="NCBI Taxonomy" id="7217"/>
    <lineage>
        <taxon>Eukaryota</taxon>
        <taxon>Metazoa</taxon>
        <taxon>Ecdysozoa</taxon>
        <taxon>Arthropoda</taxon>
        <taxon>Hexapoda</taxon>
        <taxon>Insecta</taxon>
        <taxon>Pterygota</taxon>
        <taxon>Neoptera</taxon>
        <taxon>Endopterygota</taxon>
        <taxon>Diptera</taxon>
        <taxon>Brachycera</taxon>
        <taxon>Muscomorpha</taxon>
        <taxon>Ephydroidea</taxon>
        <taxon>Drosophilidae</taxon>
        <taxon>Drosophila</taxon>
        <taxon>Sophophora</taxon>
    </lineage>
</organism>